<name>CARB_LIMRJ</name>
<evidence type="ECO:0000255" key="1">
    <source>
        <dbReference type="HAMAP-Rule" id="MF_01210"/>
    </source>
</evidence>
<protein>
    <recommendedName>
        <fullName evidence="1">Carbamoyl phosphate synthase large chain</fullName>
        <ecNumber evidence="1">6.3.4.16</ecNumber>
        <ecNumber evidence="1">6.3.5.5</ecNumber>
    </recommendedName>
    <alternativeName>
        <fullName evidence="1">Carbamoyl phosphate synthetase ammonia chain</fullName>
    </alternativeName>
</protein>
<feature type="chain" id="PRO_1000138894" description="Carbamoyl phosphate synthase large chain">
    <location>
        <begin position="1"/>
        <end position="1056"/>
    </location>
</feature>
<feature type="domain" description="ATP-grasp 1" evidence="1">
    <location>
        <begin position="133"/>
        <end position="327"/>
    </location>
</feature>
<feature type="domain" description="ATP-grasp 2" evidence="1">
    <location>
        <begin position="671"/>
        <end position="861"/>
    </location>
</feature>
<feature type="domain" description="MGS-like" evidence="1">
    <location>
        <begin position="930"/>
        <end position="1056"/>
    </location>
</feature>
<feature type="region of interest" description="Carboxyphosphate synthetic domain" evidence="1">
    <location>
        <begin position="1"/>
        <end position="401"/>
    </location>
</feature>
<feature type="region of interest" description="Oligomerization domain" evidence="1">
    <location>
        <begin position="402"/>
        <end position="546"/>
    </location>
</feature>
<feature type="region of interest" description="Carbamoyl phosphate synthetic domain" evidence="1">
    <location>
        <begin position="547"/>
        <end position="929"/>
    </location>
</feature>
<feature type="region of interest" description="Allosteric domain" evidence="1">
    <location>
        <begin position="930"/>
        <end position="1056"/>
    </location>
</feature>
<feature type="binding site" evidence="1">
    <location>
        <position position="129"/>
    </location>
    <ligand>
        <name>ATP</name>
        <dbReference type="ChEBI" id="CHEBI:30616"/>
        <label>1</label>
    </ligand>
</feature>
<feature type="binding site" evidence="1">
    <location>
        <position position="169"/>
    </location>
    <ligand>
        <name>ATP</name>
        <dbReference type="ChEBI" id="CHEBI:30616"/>
        <label>1</label>
    </ligand>
</feature>
<feature type="binding site" evidence="1">
    <location>
        <position position="175"/>
    </location>
    <ligand>
        <name>ATP</name>
        <dbReference type="ChEBI" id="CHEBI:30616"/>
        <label>1</label>
    </ligand>
</feature>
<feature type="binding site" evidence="1">
    <location>
        <position position="176"/>
    </location>
    <ligand>
        <name>ATP</name>
        <dbReference type="ChEBI" id="CHEBI:30616"/>
        <label>1</label>
    </ligand>
</feature>
<feature type="binding site" evidence="1">
    <location>
        <position position="208"/>
    </location>
    <ligand>
        <name>ATP</name>
        <dbReference type="ChEBI" id="CHEBI:30616"/>
        <label>1</label>
    </ligand>
</feature>
<feature type="binding site" evidence="1">
    <location>
        <position position="210"/>
    </location>
    <ligand>
        <name>ATP</name>
        <dbReference type="ChEBI" id="CHEBI:30616"/>
        <label>1</label>
    </ligand>
</feature>
<feature type="binding site" evidence="1">
    <location>
        <position position="215"/>
    </location>
    <ligand>
        <name>ATP</name>
        <dbReference type="ChEBI" id="CHEBI:30616"/>
        <label>1</label>
    </ligand>
</feature>
<feature type="binding site" evidence="1">
    <location>
        <position position="241"/>
    </location>
    <ligand>
        <name>ATP</name>
        <dbReference type="ChEBI" id="CHEBI:30616"/>
        <label>1</label>
    </ligand>
</feature>
<feature type="binding site" evidence="1">
    <location>
        <position position="242"/>
    </location>
    <ligand>
        <name>ATP</name>
        <dbReference type="ChEBI" id="CHEBI:30616"/>
        <label>1</label>
    </ligand>
</feature>
<feature type="binding site" evidence="1">
    <location>
        <position position="243"/>
    </location>
    <ligand>
        <name>ATP</name>
        <dbReference type="ChEBI" id="CHEBI:30616"/>
        <label>1</label>
    </ligand>
</feature>
<feature type="binding site" evidence="1">
    <location>
        <position position="284"/>
    </location>
    <ligand>
        <name>ATP</name>
        <dbReference type="ChEBI" id="CHEBI:30616"/>
        <label>1</label>
    </ligand>
</feature>
<feature type="binding site" evidence="1">
    <location>
        <position position="284"/>
    </location>
    <ligand>
        <name>Mg(2+)</name>
        <dbReference type="ChEBI" id="CHEBI:18420"/>
        <label>1</label>
    </ligand>
</feature>
<feature type="binding site" evidence="1">
    <location>
        <position position="284"/>
    </location>
    <ligand>
        <name>Mn(2+)</name>
        <dbReference type="ChEBI" id="CHEBI:29035"/>
        <label>1</label>
    </ligand>
</feature>
<feature type="binding site" evidence="1">
    <location>
        <position position="298"/>
    </location>
    <ligand>
        <name>ATP</name>
        <dbReference type="ChEBI" id="CHEBI:30616"/>
        <label>1</label>
    </ligand>
</feature>
<feature type="binding site" evidence="1">
    <location>
        <position position="298"/>
    </location>
    <ligand>
        <name>Mg(2+)</name>
        <dbReference type="ChEBI" id="CHEBI:18420"/>
        <label>1</label>
    </ligand>
</feature>
<feature type="binding site" evidence="1">
    <location>
        <position position="298"/>
    </location>
    <ligand>
        <name>Mg(2+)</name>
        <dbReference type="ChEBI" id="CHEBI:18420"/>
        <label>2</label>
    </ligand>
</feature>
<feature type="binding site" evidence="1">
    <location>
        <position position="298"/>
    </location>
    <ligand>
        <name>Mn(2+)</name>
        <dbReference type="ChEBI" id="CHEBI:29035"/>
        <label>1</label>
    </ligand>
</feature>
<feature type="binding site" evidence="1">
    <location>
        <position position="298"/>
    </location>
    <ligand>
        <name>Mn(2+)</name>
        <dbReference type="ChEBI" id="CHEBI:29035"/>
        <label>2</label>
    </ligand>
</feature>
<feature type="binding site" evidence="1">
    <location>
        <position position="300"/>
    </location>
    <ligand>
        <name>Mg(2+)</name>
        <dbReference type="ChEBI" id="CHEBI:18420"/>
        <label>2</label>
    </ligand>
</feature>
<feature type="binding site" evidence="1">
    <location>
        <position position="300"/>
    </location>
    <ligand>
        <name>Mn(2+)</name>
        <dbReference type="ChEBI" id="CHEBI:29035"/>
        <label>2</label>
    </ligand>
</feature>
<feature type="binding site" evidence="1">
    <location>
        <position position="707"/>
    </location>
    <ligand>
        <name>ATP</name>
        <dbReference type="ChEBI" id="CHEBI:30616"/>
        <label>2</label>
    </ligand>
</feature>
<feature type="binding site" evidence="1">
    <location>
        <position position="746"/>
    </location>
    <ligand>
        <name>ATP</name>
        <dbReference type="ChEBI" id="CHEBI:30616"/>
        <label>2</label>
    </ligand>
</feature>
<feature type="binding site" evidence="1">
    <location>
        <position position="748"/>
    </location>
    <ligand>
        <name>ATP</name>
        <dbReference type="ChEBI" id="CHEBI:30616"/>
        <label>2</label>
    </ligand>
</feature>
<feature type="binding site" evidence="1">
    <location>
        <position position="752"/>
    </location>
    <ligand>
        <name>ATP</name>
        <dbReference type="ChEBI" id="CHEBI:30616"/>
        <label>2</label>
    </ligand>
</feature>
<feature type="binding site" evidence="1">
    <location>
        <position position="777"/>
    </location>
    <ligand>
        <name>ATP</name>
        <dbReference type="ChEBI" id="CHEBI:30616"/>
        <label>2</label>
    </ligand>
</feature>
<feature type="binding site" evidence="1">
    <location>
        <position position="778"/>
    </location>
    <ligand>
        <name>ATP</name>
        <dbReference type="ChEBI" id="CHEBI:30616"/>
        <label>2</label>
    </ligand>
</feature>
<feature type="binding site" evidence="1">
    <location>
        <position position="779"/>
    </location>
    <ligand>
        <name>ATP</name>
        <dbReference type="ChEBI" id="CHEBI:30616"/>
        <label>2</label>
    </ligand>
</feature>
<feature type="binding site" evidence="1">
    <location>
        <position position="780"/>
    </location>
    <ligand>
        <name>ATP</name>
        <dbReference type="ChEBI" id="CHEBI:30616"/>
        <label>2</label>
    </ligand>
</feature>
<feature type="binding site" evidence="1">
    <location>
        <position position="820"/>
    </location>
    <ligand>
        <name>ATP</name>
        <dbReference type="ChEBI" id="CHEBI:30616"/>
        <label>2</label>
    </ligand>
</feature>
<feature type="binding site" evidence="1">
    <location>
        <position position="820"/>
    </location>
    <ligand>
        <name>Mg(2+)</name>
        <dbReference type="ChEBI" id="CHEBI:18420"/>
        <label>3</label>
    </ligand>
</feature>
<feature type="binding site" evidence="1">
    <location>
        <position position="820"/>
    </location>
    <ligand>
        <name>Mn(2+)</name>
        <dbReference type="ChEBI" id="CHEBI:29035"/>
        <label>3</label>
    </ligand>
</feature>
<feature type="binding site" evidence="1">
    <location>
        <position position="832"/>
    </location>
    <ligand>
        <name>ATP</name>
        <dbReference type="ChEBI" id="CHEBI:30616"/>
        <label>2</label>
    </ligand>
</feature>
<feature type="binding site" evidence="1">
    <location>
        <position position="832"/>
    </location>
    <ligand>
        <name>Mg(2+)</name>
        <dbReference type="ChEBI" id="CHEBI:18420"/>
        <label>3</label>
    </ligand>
</feature>
<feature type="binding site" evidence="1">
    <location>
        <position position="832"/>
    </location>
    <ligand>
        <name>Mg(2+)</name>
        <dbReference type="ChEBI" id="CHEBI:18420"/>
        <label>4</label>
    </ligand>
</feature>
<feature type="binding site" evidence="1">
    <location>
        <position position="832"/>
    </location>
    <ligand>
        <name>Mn(2+)</name>
        <dbReference type="ChEBI" id="CHEBI:29035"/>
        <label>3</label>
    </ligand>
</feature>
<feature type="binding site" evidence="1">
    <location>
        <position position="832"/>
    </location>
    <ligand>
        <name>Mn(2+)</name>
        <dbReference type="ChEBI" id="CHEBI:29035"/>
        <label>4</label>
    </ligand>
</feature>
<feature type="binding site" evidence="1">
    <location>
        <position position="834"/>
    </location>
    <ligand>
        <name>Mg(2+)</name>
        <dbReference type="ChEBI" id="CHEBI:18420"/>
        <label>4</label>
    </ligand>
</feature>
<feature type="binding site" evidence="1">
    <location>
        <position position="834"/>
    </location>
    <ligand>
        <name>Mn(2+)</name>
        <dbReference type="ChEBI" id="CHEBI:29035"/>
        <label>4</label>
    </ligand>
</feature>
<organism>
    <name type="scientific">Limosilactobacillus reuteri subsp. reuteri (strain JCM 1112)</name>
    <name type="common">Lactobacillus reuteri</name>
    <dbReference type="NCBI Taxonomy" id="557433"/>
    <lineage>
        <taxon>Bacteria</taxon>
        <taxon>Bacillati</taxon>
        <taxon>Bacillota</taxon>
        <taxon>Bacilli</taxon>
        <taxon>Lactobacillales</taxon>
        <taxon>Lactobacillaceae</taxon>
        <taxon>Limosilactobacillus</taxon>
    </lineage>
</organism>
<comment type="function">
    <text evidence="1">Large subunit of the glutamine-dependent carbamoyl phosphate synthetase (CPSase). CPSase catalyzes the formation of carbamoyl phosphate from the ammonia moiety of glutamine, carbonate, and phosphate donated by ATP, constituting the first step of 2 biosynthetic pathways, one leading to arginine and/or urea and the other to pyrimidine nucleotides. The large subunit (synthetase) binds the substrates ammonia (free or transferred from glutamine from the small subunit), hydrogencarbonate and ATP and carries out an ATP-coupled ligase reaction, activating hydrogencarbonate by forming carboxy phosphate which reacts with ammonia to form carbamoyl phosphate.</text>
</comment>
<comment type="catalytic activity">
    <reaction evidence="1">
        <text>hydrogencarbonate + L-glutamine + 2 ATP + H2O = carbamoyl phosphate + L-glutamate + 2 ADP + phosphate + 2 H(+)</text>
        <dbReference type="Rhea" id="RHEA:18633"/>
        <dbReference type="ChEBI" id="CHEBI:15377"/>
        <dbReference type="ChEBI" id="CHEBI:15378"/>
        <dbReference type="ChEBI" id="CHEBI:17544"/>
        <dbReference type="ChEBI" id="CHEBI:29985"/>
        <dbReference type="ChEBI" id="CHEBI:30616"/>
        <dbReference type="ChEBI" id="CHEBI:43474"/>
        <dbReference type="ChEBI" id="CHEBI:58228"/>
        <dbReference type="ChEBI" id="CHEBI:58359"/>
        <dbReference type="ChEBI" id="CHEBI:456216"/>
        <dbReference type="EC" id="6.3.5.5"/>
    </reaction>
</comment>
<comment type="catalytic activity">
    <molecule>Carbamoyl phosphate synthase large chain</molecule>
    <reaction evidence="1">
        <text>hydrogencarbonate + NH4(+) + 2 ATP = carbamoyl phosphate + 2 ADP + phosphate + 2 H(+)</text>
        <dbReference type="Rhea" id="RHEA:18029"/>
        <dbReference type="ChEBI" id="CHEBI:15378"/>
        <dbReference type="ChEBI" id="CHEBI:17544"/>
        <dbReference type="ChEBI" id="CHEBI:28938"/>
        <dbReference type="ChEBI" id="CHEBI:30616"/>
        <dbReference type="ChEBI" id="CHEBI:43474"/>
        <dbReference type="ChEBI" id="CHEBI:58228"/>
        <dbReference type="ChEBI" id="CHEBI:456216"/>
        <dbReference type="EC" id="6.3.4.16"/>
    </reaction>
</comment>
<comment type="cofactor">
    <cofactor evidence="1">
        <name>Mg(2+)</name>
        <dbReference type="ChEBI" id="CHEBI:18420"/>
    </cofactor>
    <cofactor evidence="1">
        <name>Mn(2+)</name>
        <dbReference type="ChEBI" id="CHEBI:29035"/>
    </cofactor>
    <text evidence="1">Binds 4 Mg(2+) or Mn(2+) ions per subunit.</text>
</comment>
<comment type="pathway">
    <text evidence="1">Amino-acid biosynthesis; L-arginine biosynthesis; carbamoyl phosphate from bicarbonate: step 1/1.</text>
</comment>
<comment type="pathway">
    <text evidence="1">Pyrimidine metabolism; UMP biosynthesis via de novo pathway; (S)-dihydroorotate from bicarbonate: step 1/3.</text>
</comment>
<comment type="subunit">
    <text evidence="1">Composed of two chains; the small (or glutamine) chain promotes the hydrolysis of glutamine to ammonia, which is used by the large (or ammonia) chain to synthesize carbamoyl phosphate. Tetramer of heterodimers (alpha,beta)4.</text>
</comment>
<comment type="domain">
    <text evidence="1">The large subunit is composed of 2 ATP-grasp domains that are involved in binding the 2 ATP molecules needed for carbamoyl phosphate synthesis. The N-terminal ATP-grasp domain (referred to as the carboxyphosphate synthetic component) catalyzes the ATP-dependent phosphorylation of hydrogencarbonate to carboxyphosphate and the subsequent nucleophilic attack by ammonia to form a carbamate intermediate. The C-terminal ATP-grasp domain (referred to as the carbamoyl phosphate synthetic component) then catalyzes the phosphorylation of carbamate with the second ATP to form the end product carbamoyl phosphate. The reactive and unstable enzyme intermediates are sequentially channeled from one active site to the next through the interior of the protein over a distance of at least 96 A.</text>
</comment>
<comment type="similarity">
    <text evidence="1">Belongs to the CarB family.</text>
</comment>
<keyword id="KW-0028">Amino-acid biosynthesis</keyword>
<keyword id="KW-0055">Arginine biosynthesis</keyword>
<keyword id="KW-0067">ATP-binding</keyword>
<keyword id="KW-0436">Ligase</keyword>
<keyword id="KW-0460">Magnesium</keyword>
<keyword id="KW-0464">Manganese</keyword>
<keyword id="KW-0479">Metal-binding</keyword>
<keyword id="KW-0547">Nucleotide-binding</keyword>
<keyword id="KW-0665">Pyrimidine biosynthesis</keyword>
<keyword id="KW-0677">Repeat</keyword>
<gene>
    <name evidence="1" type="primary">carB</name>
    <name type="ordered locus">LAR_0080</name>
</gene>
<dbReference type="EC" id="6.3.4.16" evidence="1"/>
<dbReference type="EC" id="6.3.5.5" evidence="1"/>
<dbReference type="EMBL" id="AP007281">
    <property type="protein sequence ID" value="BAG24596.1"/>
    <property type="molecule type" value="Genomic_DNA"/>
</dbReference>
<dbReference type="RefSeq" id="WP_003669623.1">
    <property type="nucleotide sequence ID" value="NC_010609.1"/>
</dbReference>
<dbReference type="SMR" id="B2G564"/>
<dbReference type="KEGG" id="lrf:LAR_0080"/>
<dbReference type="HOGENOM" id="CLU_000513_1_0_9"/>
<dbReference type="UniPathway" id="UPA00068">
    <property type="reaction ID" value="UER00171"/>
</dbReference>
<dbReference type="UniPathway" id="UPA00070">
    <property type="reaction ID" value="UER00115"/>
</dbReference>
<dbReference type="GO" id="GO:0005737">
    <property type="term" value="C:cytoplasm"/>
    <property type="evidence" value="ECO:0007669"/>
    <property type="project" value="TreeGrafter"/>
</dbReference>
<dbReference type="GO" id="GO:0005524">
    <property type="term" value="F:ATP binding"/>
    <property type="evidence" value="ECO:0007669"/>
    <property type="project" value="UniProtKB-UniRule"/>
</dbReference>
<dbReference type="GO" id="GO:0004087">
    <property type="term" value="F:carbamoyl-phosphate synthase (ammonia) activity"/>
    <property type="evidence" value="ECO:0007669"/>
    <property type="project" value="RHEA"/>
</dbReference>
<dbReference type="GO" id="GO:0004088">
    <property type="term" value="F:carbamoyl-phosphate synthase (glutamine-hydrolyzing) activity"/>
    <property type="evidence" value="ECO:0007669"/>
    <property type="project" value="UniProtKB-UniRule"/>
</dbReference>
<dbReference type="GO" id="GO:0046872">
    <property type="term" value="F:metal ion binding"/>
    <property type="evidence" value="ECO:0007669"/>
    <property type="project" value="UniProtKB-KW"/>
</dbReference>
<dbReference type="GO" id="GO:0044205">
    <property type="term" value="P:'de novo' UMP biosynthetic process"/>
    <property type="evidence" value="ECO:0007669"/>
    <property type="project" value="UniProtKB-UniRule"/>
</dbReference>
<dbReference type="GO" id="GO:0006541">
    <property type="term" value="P:glutamine metabolic process"/>
    <property type="evidence" value="ECO:0007669"/>
    <property type="project" value="TreeGrafter"/>
</dbReference>
<dbReference type="GO" id="GO:0006526">
    <property type="term" value="P:L-arginine biosynthetic process"/>
    <property type="evidence" value="ECO:0007669"/>
    <property type="project" value="UniProtKB-UniRule"/>
</dbReference>
<dbReference type="FunFam" id="1.10.1030.10:FF:000002">
    <property type="entry name" value="Carbamoyl-phosphate synthase large chain"/>
    <property type="match status" value="1"/>
</dbReference>
<dbReference type="FunFam" id="3.30.1490.20:FF:000001">
    <property type="entry name" value="Carbamoyl-phosphate synthase large chain"/>
    <property type="match status" value="1"/>
</dbReference>
<dbReference type="FunFam" id="3.30.470.20:FF:000001">
    <property type="entry name" value="Carbamoyl-phosphate synthase large chain"/>
    <property type="match status" value="1"/>
</dbReference>
<dbReference type="FunFam" id="3.30.470.20:FF:000026">
    <property type="entry name" value="Carbamoyl-phosphate synthase large chain"/>
    <property type="match status" value="1"/>
</dbReference>
<dbReference type="FunFam" id="3.40.50.20:FF:000001">
    <property type="entry name" value="Carbamoyl-phosphate synthase large chain"/>
    <property type="match status" value="2"/>
</dbReference>
<dbReference type="Gene3D" id="3.40.50.20">
    <property type="match status" value="2"/>
</dbReference>
<dbReference type="Gene3D" id="3.30.1490.20">
    <property type="entry name" value="ATP-grasp fold, A domain"/>
    <property type="match status" value="1"/>
</dbReference>
<dbReference type="Gene3D" id="3.30.470.20">
    <property type="entry name" value="ATP-grasp fold, B domain"/>
    <property type="match status" value="2"/>
</dbReference>
<dbReference type="Gene3D" id="1.10.1030.10">
    <property type="entry name" value="Carbamoyl-phosphate synthetase, large subunit oligomerisation domain"/>
    <property type="match status" value="1"/>
</dbReference>
<dbReference type="Gene3D" id="3.40.50.1380">
    <property type="entry name" value="Methylglyoxal synthase-like domain"/>
    <property type="match status" value="1"/>
</dbReference>
<dbReference type="HAMAP" id="MF_01210_B">
    <property type="entry name" value="CPSase_L_chain_B"/>
    <property type="match status" value="1"/>
</dbReference>
<dbReference type="InterPro" id="IPR011761">
    <property type="entry name" value="ATP-grasp"/>
</dbReference>
<dbReference type="InterPro" id="IPR013815">
    <property type="entry name" value="ATP_grasp_subdomain_1"/>
</dbReference>
<dbReference type="InterPro" id="IPR006275">
    <property type="entry name" value="CarbamoylP_synth_lsu"/>
</dbReference>
<dbReference type="InterPro" id="IPR005480">
    <property type="entry name" value="CarbamoylP_synth_lsu_oligo"/>
</dbReference>
<dbReference type="InterPro" id="IPR036897">
    <property type="entry name" value="CarbamoylP_synth_lsu_oligo_sf"/>
</dbReference>
<dbReference type="InterPro" id="IPR005479">
    <property type="entry name" value="CbamoylP_synth_lsu-like_ATP-bd"/>
</dbReference>
<dbReference type="InterPro" id="IPR005483">
    <property type="entry name" value="CbamoylP_synth_lsu_CPSase_dom"/>
</dbReference>
<dbReference type="InterPro" id="IPR011607">
    <property type="entry name" value="MGS-like_dom"/>
</dbReference>
<dbReference type="InterPro" id="IPR036914">
    <property type="entry name" value="MGS-like_dom_sf"/>
</dbReference>
<dbReference type="InterPro" id="IPR016185">
    <property type="entry name" value="PreATP-grasp_dom_sf"/>
</dbReference>
<dbReference type="NCBIfam" id="TIGR01369">
    <property type="entry name" value="CPSaseII_lrg"/>
    <property type="match status" value="1"/>
</dbReference>
<dbReference type="NCBIfam" id="NF003671">
    <property type="entry name" value="PRK05294.1"/>
    <property type="match status" value="1"/>
</dbReference>
<dbReference type="NCBIfam" id="NF009455">
    <property type="entry name" value="PRK12815.1"/>
    <property type="match status" value="1"/>
</dbReference>
<dbReference type="PANTHER" id="PTHR11405:SF53">
    <property type="entry name" value="CARBAMOYL-PHOSPHATE SYNTHASE [AMMONIA], MITOCHONDRIAL"/>
    <property type="match status" value="1"/>
</dbReference>
<dbReference type="PANTHER" id="PTHR11405">
    <property type="entry name" value="CARBAMOYLTRANSFERASE FAMILY MEMBER"/>
    <property type="match status" value="1"/>
</dbReference>
<dbReference type="Pfam" id="PF02786">
    <property type="entry name" value="CPSase_L_D2"/>
    <property type="match status" value="2"/>
</dbReference>
<dbReference type="Pfam" id="PF02787">
    <property type="entry name" value="CPSase_L_D3"/>
    <property type="match status" value="1"/>
</dbReference>
<dbReference type="Pfam" id="PF02142">
    <property type="entry name" value="MGS"/>
    <property type="match status" value="1"/>
</dbReference>
<dbReference type="PRINTS" id="PR00098">
    <property type="entry name" value="CPSASE"/>
</dbReference>
<dbReference type="SMART" id="SM01096">
    <property type="entry name" value="CPSase_L_D3"/>
    <property type="match status" value="1"/>
</dbReference>
<dbReference type="SMART" id="SM00851">
    <property type="entry name" value="MGS"/>
    <property type="match status" value="1"/>
</dbReference>
<dbReference type="SUPFAM" id="SSF48108">
    <property type="entry name" value="Carbamoyl phosphate synthetase, large subunit connection domain"/>
    <property type="match status" value="1"/>
</dbReference>
<dbReference type="SUPFAM" id="SSF56059">
    <property type="entry name" value="Glutathione synthetase ATP-binding domain-like"/>
    <property type="match status" value="2"/>
</dbReference>
<dbReference type="SUPFAM" id="SSF52335">
    <property type="entry name" value="Methylglyoxal synthase-like"/>
    <property type="match status" value="1"/>
</dbReference>
<dbReference type="SUPFAM" id="SSF52440">
    <property type="entry name" value="PreATP-grasp domain"/>
    <property type="match status" value="2"/>
</dbReference>
<dbReference type="PROSITE" id="PS50975">
    <property type="entry name" value="ATP_GRASP"/>
    <property type="match status" value="2"/>
</dbReference>
<dbReference type="PROSITE" id="PS00866">
    <property type="entry name" value="CPSASE_1"/>
    <property type="match status" value="2"/>
</dbReference>
<dbReference type="PROSITE" id="PS00867">
    <property type="entry name" value="CPSASE_2"/>
    <property type="match status" value="2"/>
</dbReference>
<dbReference type="PROSITE" id="PS51855">
    <property type="entry name" value="MGS"/>
    <property type="match status" value="1"/>
</dbReference>
<reference key="1">
    <citation type="journal article" date="2008" name="DNA Res.">
        <title>Comparative genome analysis of Lactobacillus reuteri and Lactobacillus fermentum reveal a genomic island for reuterin and cobalamin production.</title>
        <authorList>
            <person name="Morita H."/>
            <person name="Toh H."/>
            <person name="Fukuda S."/>
            <person name="Horikawa H."/>
            <person name="Oshima K."/>
            <person name="Suzuki T."/>
            <person name="Murakami M."/>
            <person name="Hisamatsu S."/>
            <person name="Kato Y."/>
            <person name="Takizawa T."/>
            <person name="Fukuoka H."/>
            <person name="Yoshimura T."/>
            <person name="Itoh K."/>
            <person name="O'Sullivan D.J."/>
            <person name="McKay L.L."/>
            <person name="Ohno H."/>
            <person name="Kikuchi J."/>
            <person name="Masaoka T."/>
            <person name="Hattori M."/>
        </authorList>
    </citation>
    <scope>NUCLEOTIDE SEQUENCE [LARGE SCALE GENOMIC DNA]</scope>
    <source>
        <strain>JCM 1112</strain>
    </source>
</reference>
<sequence length="1056" mass="116836">MPKRTDIHKILVIGSGPIIIGQAAEFDYSGTQACLALREEGYETILVNSNPATIMTDKEIADHVYIEPLTVESLSRIIRQEYPDAILPTLGGQIGLNLAVSLSETGLLDELGIELLGTKLDSIDEAEDREKFKELMNELGEPVPASQTVNTVDEAVEFAHQCGYPVIVRPAFTMGGTGGGICHNDAEMRTVAKNGLELSPVTQCLIEKSIAGYKEIEFEVMRDAADNVMVVCCMENFDPVGIHTGDSIVFAPNQTLSDREYQMLRDCALKLIRALKIEGGCNVQLALDPQSFQYNVIEVNPRVSRSSALASKATGYPIAKMAAKIAVGLTLDEIKNPVTKTTFAEFEPALDYVVCKIPRWPFDKFTQADRHLGSQMKATGEVMAIGRTAEEALHKAVRSLEIDEKDLFSAEAHHAPTDMLEKKLRYPQDDRLFYLAETFRRGYSLQQTHDLTKISPYFLDIVKHLVELEDDLSTKPFDVETLITSKKYGFSDATIARLWHTSSQEVRKFRKQNEVLPVYKMIDTCAAEFASSTPYFYSAYDHENESQRTKKPSILVLGSGPIRIGQGVEFDYATVHSVKAIQRAGYEAIVINSNPETVSTDFSVSDKLYFEPLTLEDVLNVIDLEQPVGVIVQFGGQTAINLAEGLAKNGVNILGTTVDDLDAAEDREVFDQVITDLNLKQPIGLTATTHSAVIKAAEKIGYPVLVRPSYVLGGKAMETVYNQEELQQYLQQNASITADHPILIDAYLEGRECEVDAICDGKDVLIPGIMEHIEHAGVHSGDSMAVYPPQHFNDDIKRQIVTATEKLAVALKCIGIMNIQFIVHNHEVYILEVNPRASRTVPFLSKITGIEMAQVATRVILGQSLADQGFTNGLYPEPQTIHVKAPVFSFNKLANVDSYLSPEMKSTGEVMGTDTTYEKALHKAFSGAHIQVPNDGKILFTIENGDEKEVLPLAKRFAQIGYQVFTTPQTASHFKDNGIHIHQEISNIDELNCLLKAGQIDLVINTMRHDYEQDSLGFQIRQSTIAQNVPLMTSLDTVNALLRVKEDQSLEAITIK</sequence>
<proteinExistence type="inferred from homology"/>
<accession>B2G564</accession>